<gene>
    <name evidence="1" type="primary">atpB</name>
    <name type="ordered locus">PH1974</name>
</gene>
<evidence type="ECO:0000255" key="1">
    <source>
        <dbReference type="HAMAP-Rule" id="MF_00310"/>
    </source>
</evidence>
<protein>
    <recommendedName>
        <fullName evidence="1">A-type ATP synthase subunit B</fullName>
    </recommendedName>
</protein>
<organism>
    <name type="scientific">Pyrococcus horikoshii (strain ATCC 700860 / DSM 12428 / JCM 9974 / NBRC 100139 / OT-3)</name>
    <dbReference type="NCBI Taxonomy" id="70601"/>
    <lineage>
        <taxon>Archaea</taxon>
        <taxon>Methanobacteriati</taxon>
        <taxon>Methanobacteriota</taxon>
        <taxon>Thermococci</taxon>
        <taxon>Thermococcales</taxon>
        <taxon>Thermococcaceae</taxon>
        <taxon>Pyrococcus</taxon>
    </lineage>
</organism>
<sequence>MMKMSKEYSTISKIYGPLMIVEGVKGVAYGEVVEIETESGEKRKGQVLDARENMAIVQVFEGTRDLDIKTTSVRFTGETLKVPVSMDMLGRIFNGIGKPIDGGPEIIPEDRRDVHGAPLNPVARAYPRDFIQTGISAIDGMNTLVRGQKLPIFSGSGLPHNQLAAQIARQAKVLGEEESFAVVFAAMGITYEEANFFKKSFEETGAIERAVLFLNLADDPAIERIITPRMALTVAEYLAFDYDMHVLVILTDMTNYCEALREISAAREEVPGRRGYPGYMYTDLATIYERAGRIRGRKGSITQMPILTMPDDDITHPIPDLTGYITEGQIVLSRELHRKGIYPPIDVLPSLSRLMKDGIGKGKTREDHPQLAQQLYAAYAEGRSLRDLVAVVGEEALSETDKKYLEFADRFEREFVAQGYYEDRSIEETLDLGWELLSILPESELKRVKKEMIMKYHPKYRKRSS</sequence>
<dbReference type="EMBL" id="BA000001">
    <property type="protein sequence ID" value="BAA31101.1"/>
    <property type="molecule type" value="Genomic_DNA"/>
</dbReference>
<dbReference type="PIR" id="F71213">
    <property type="entry name" value="F71213"/>
</dbReference>
<dbReference type="SMR" id="O57729"/>
<dbReference type="STRING" id="70601.gene:9378987"/>
<dbReference type="EnsemblBacteria" id="BAA31101">
    <property type="protein sequence ID" value="BAA31101"/>
    <property type="gene ID" value="BAA31101"/>
</dbReference>
<dbReference type="KEGG" id="pho:PH1974"/>
<dbReference type="eggNOG" id="arCOG00865">
    <property type="taxonomic scope" value="Archaea"/>
</dbReference>
<dbReference type="Proteomes" id="UP000000752">
    <property type="component" value="Chromosome"/>
</dbReference>
<dbReference type="GO" id="GO:0005886">
    <property type="term" value="C:plasma membrane"/>
    <property type="evidence" value="ECO:0007669"/>
    <property type="project" value="UniProtKB-SubCell"/>
</dbReference>
<dbReference type="GO" id="GO:0033178">
    <property type="term" value="C:proton-transporting two-sector ATPase complex, catalytic domain"/>
    <property type="evidence" value="ECO:0007669"/>
    <property type="project" value="InterPro"/>
</dbReference>
<dbReference type="GO" id="GO:0005524">
    <property type="term" value="F:ATP binding"/>
    <property type="evidence" value="ECO:0007669"/>
    <property type="project" value="UniProtKB-UniRule"/>
</dbReference>
<dbReference type="GO" id="GO:0046933">
    <property type="term" value="F:proton-transporting ATP synthase activity, rotational mechanism"/>
    <property type="evidence" value="ECO:0007669"/>
    <property type="project" value="UniProtKB-UniRule"/>
</dbReference>
<dbReference type="GO" id="GO:0042777">
    <property type="term" value="P:proton motive force-driven plasma membrane ATP synthesis"/>
    <property type="evidence" value="ECO:0007669"/>
    <property type="project" value="UniProtKB-UniRule"/>
</dbReference>
<dbReference type="CDD" id="cd18112">
    <property type="entry name" value="ATP-synt_V_A-type_beta_C"/>
    <property type="match status" value="1"/>
</dbReference>
<dbReference type="CDD" id="cd18118">
    <property type="entry name" value="ATP-synt_V_A-type_beta_N"/>
    <property type="match status" value="1"/>
</dbReference>
<dbReference type="CDD" id="cd01135">
    <property type="entry name" value="V_A-ATPase_B"/>
    <property type="match status" value="1"/>
</dbReference>
<dbReference type="Gene3D" id="3.40.50.12240">
    <property type="match status" value="1"/>
</dbReference>
<dbReference type="HAMAP" id="MF_00310">
    <property type="entry name" value="ATP_synth_B_arch"/>
    <property type="match status" value="1"/>
</dbReference>
<dbReference type="InterPro" id="IPR055190">
    <property type="entry name" value="ATP-synt_VA_C"/>
</dbReference>
<dbReference type="InterPro" id="IPR020003">
    <property type="entry name" value="ATPase_a/bsu_AS"/>
</dbReference>
<dbReference type="InterPro" id="IPR005724">
    <property type="entry name" value="ATPase_A1-cplx_bsu"/>
</dbReference>
<dbReference type="InterPro" id="IPR004100">
    <property type="entry name" value="ATPase_F1/V1/A1_a/bsu_N"/>
</dbReference>
<dbReference type="InterPro" id="IPR000194">
    <property type="entry name" value="ATPase_F1/V1/A1_a/bsu_nucl-bd"/>
</dbReference>
<dbReference type="InterPro" id="IPR027417">
    <property type="entry name" value="P-loop_NTPase"/>
</dbReference>
<dbReference type="InterPro" id="IPR022879">
    <property type="entry name" value="V-ATPase_su_B/beta"/>
</dbReference>
<dbReference type="NCBIfam" id="TIGR01041">
    <property type="entry name" value="ATP_syn_B_arch"/>
    <property type="match status" value="1"/>
</dbReference>
<dbReference type="NCBIfam" id="NF003235">
    <property type="entry name" value="PRK04196.1"/>
    <property type="match status" value="1"/>
</dbReference>
<dbReference type="PANTHER" id="PTHR43389">
    <property type="entry name" value="V-TYPE PROTON ATPASE SUBUNIT B"/>
    <property type="match status" value="1"/>
</dbReference>
<dbReference type="PANTHER" id="PTHR43389:SF4">
    <property type="entry name" value="V-TYPE PROTON ATPASE SUBUNIT B"/>
    <property type="match status" value="1"/>
</dbReference>
<dbReference type="Pfam" id="PF00006">
    <property type="entry name" value="ATP-synt_ab"/>
    <property type="match status" value="1"/>
</dbReference>
<dbReference type="Pfam" id="PF02874">
    <property type="entry name" value="ATP-synt_ab_N"/>
    <property type="match status" value="1"/>
</dbReference>
<dbReference type="Pfam" id="PF22919">
    <property type="entry name" value="ATP-synt_VA_C"/>
    <property type="match status" value="1"/>
</dbReference>
<dbReference type="PIRSF" id="PIRSF039114">
    <property type="entry name" value="V-ATPsynth_beta/V-ATPase_B"/>
    <property type="match status" value="1"/>
</dbReference>
<dbReference type="SUPFAM" id="SSF47917">
    <property type="entry name" value="C-terminal domain of alpha and beta subunits of F1 ATP synthase"/>
    <property type="match status" value="1"/>
</dbReference>
<dbReference type="SUPFAM" id="SSF52540">
    <property type="entry name" value="P-loop containing nucleoside triphosphate hydrolases"/>
    <property type="match status" value="1"/>
</dbReference>
<dbReference type="PROSITE" id="PS00152">
    <property type="entry name" value="ATPASE_ALPHA_BETA"/>
    <property type="match status" value="1"/>
</dbReference>
<keyword id="KW-0066">ATP synthesis</keyword>
<keyword id="KW-1003">Cell membrane</keyword>
<keyword id="KW-0375">Hydrogen ion transport</keyword>
<keyword id="KW-0406">Ion transport</keyword>
<keyword id="KW-0472">Membrane</keyword>
<keyword id="KW-0813">Transport</keyword>
<comment type="function">
    <text evidence="1">Component of the A-type ATP synthase that produces ATP from ADP in the presence of a proton gradient across the membrane. The B chain is a regulatory subunit.</text>
</comment>
<comment type="subunit">
    <text evidence="1">Has multiple subunits with at least A(3), B(3), C, D, E, F, H, I and proteolipid K(x).</text>
</comment>
<comment type="subcellular location">
    <subcellularLocation>
        <location evidence="1">Cell membrane</location>
        <topology evidence="1">Peripheral membrane protein</topology>
    </subcellularLocation>
</comment>
<comment type="similarity">
    <text evidence="1">Belongs to the ATPase alpha/beta chains family.</text>
</comment>
<reference key="1">
    <citation type="journal article" date="1998" name="DNA Res.">
        <title>Complete sequence and gene organization of the genome of a hyper-thermophilic archaebacterium, Pyrococcus horikoshii OT3.</title>
        <authorList>
            <person name="Kawarabayasi Y."/>
            <person name="Sawada M."/>
            <person name="Horikawa H."/>
            <person name="Haikawa Y."/>
            <person name="Hino Y."/>
            <person name="Yamamoto S."/>
            <person name="Sekine M."/>
            <person name="Baba S."/>
            <person name="Kosugi H."/>
            <person name="Hosoyama A."/>
            <person name="Nagai Y."/>
            <person name="Sakai M."/>
            <person name="Ogura K."/>
            <person name="Otsuka R."/>
            <person name="Nakazawa H."/>
            <person name="Takamiya M."/>
            <person name="Ohfuku Y."/>
            <person name="Funahashi T."/>
            <person name="Tanaka T."/>
            <person name="Kudoh Y."/>
            <person name="Yamazaki J."/>
            <person name="Kushida N."/>
            <person name="Oguchi A."/>
            <person name="Aoki K."/>
            <person name="Yoshizawa T."/>
            <person name="Nakamura Y."/>
            <person name="Robb F.T."/>
            <person name="Horikoshi K."/>
            <person name="Masuchi Y."/>
            <person name="Shizuya H."/>
            <person name="Kikuchi H."/>
        </authorList>
    </citation>
    <scope>NUCLEOTIDE SEQUENCE [LARGE SCALE GENOMIC DNA]</scope>
    <source>
        <strain>ATCC 700860 / DSM 12428 / JCM 9974 / NBRC 100139 / OT-3</strain>
    </source>
</reference>
<name>AATB_PYRHO</name>
<feature type="chain" id="PRO_0000144664" description="A-type ATP synthase subunit B">
    <location>
        <begin position="1"/>
        <end position="465"/>
    </location>
</feature>
<proteinExistence type="inferred from homology"/>
<accession>O57729</accession>